<accession>Q8MJ87</accession>
<organism>
    <name type="scientific">Bos taurus</name>
    <name type="common">Bovine</name>
    <dbReference type="NCBI Taxonomy" id="9913"/>
    <lineage>
        <taxon>Eukaryota</taxon>
        <taxon>Metazoa</taxon>
        <taxon>Chordata</taxon>
        <taxon>Craniata</taxon>
        <taxon>Vertebrata</taxon>
        <taxon>Euteleostomi</taxon>
        <taxon>Mammalia</taxon>
        <taxon>Eutheria</taxon>
        <taxon>Laurasiatheria</taxon>
        <taxon>Artiodactyla</taxon>
        <taxon>Ruminantia</taxon>
        <taxon>Pecora</taxon>
        <taxon>Bovidae</taxon>
        <taxon>Bovinae</taxon>
        <taxon>Bos</taxon>
    </lineage>
</organism>
<proteinExistence type="evidence at protein level"/>
<dbReference type="EMBL" id="AF514279">
    <property type="protein sequence ID" value="AAM74162.1"/>
    <property type="molecule type" value="mRNA"/>
</dbReference>
<dbReference type="SMR" id="Q8MJ87"/>
<dbReference type="IntAct" id="Q8MJ87">
    <property type="interactions" value="1"/>
</dbReference>
<dbReference type="STRING" id="9913.ENSBTAP00000005970"/>
<dbReference type="PaxDb" id="9913-ENSBTAP00000005970"/>
<dbReference type="eggNOG" id="KOG2561">
    <property type="taxonomic scope" value="Eukaryota"/>
</dbReference>
<dbReference type="HOGENOM" id="CLU_030806_0_0_1"/>
<dbReference type="InParanoid" id="Q8MJ87"/>
<dbReference type="Proteomes" id="UP000009136">
    <property type="component" value="Unplaced"/>
</dbReference>
<dbReference type="GO" id="GO:0005634">
    <property type="term" value="C:nucleus"/>
    <property type="evidence" value="ECO:0007669"/>
    <property type="project" value="UniProtKB-SubCell"/>
</dbReference>
<dbReference type="GO" id="GO:0032436">
    <property type="term" value="P:positive regulation of proteasomal ubiquitin-dependent protein catabolic process"/>
    <property type="evidence" value="ECO:0000250"/>
    <property type="project" value="UniProtKB"/>
</dbReference>
<dbReference type="GO" id="GO:0016567">
    <property type="term" value="P:protein ubiquitination"/>
    <property type="evidence" value="ECO:0000250"/>
    <property type="project" value="UniProtKB"/>
</dbReference>
<dbReference type="GO" id="GO:0006511">
    <property type="term" value="P:ubiquitin-dependent protein catabolic process"/>
    <property type="evidence" value="ECO:0000250"/>
    <property type="project" value="UniProtKB"/>
</dbReference>
<dbReference type="Gene3D" id="1.10.8.10">
    <property type="entry name" value="DNA helicase RuvA subunit, C-terminal domain"/>
    <property type="match status" value="2"/>
</dbReference>
<dbReference type="InterPro" id="IPR039749">
    <property type="entry name" value="NUB1"/>
</dbReference>
<dbReference type="InterPro" id="IPR015940">
    <property type="entry name" value="UBA"/>
</dbReference>
<dbReference type="InterPro" id="IPR009060">
    <property type="entry name" value="UBA-like_sf"/>
</dbReference>
<dbReference type="PANTHER" id="PTHR12948:SF3">
    <property type="entry name" value="NEDD8 ULTIMATE BUSTER 1"/>
    <property type="match status" value="1"/>
</dbReference>
<dbReference type="PANTHER" id="PTHR12948">
    <property type="entry name" value="NEDD8 ULTIMATE BUSTER-1 BS4 PROTEIN"/>
    <property type="match status" value="1"/>
</dbReference>
<dbReference type="Pfam" id="PF00627">
    <property type="entry name" value="UBA"/>
    <property type="match status" value="2"/>
</dbReference>
<dbReference type="SMART" id="SM00165">
    <property type="entry name" value="UBA"/>
    <property type="match status" value="2"/>
</dbReference>
<dbReference type="SUPFAM" id="SSF46934">
    <property type="entry name" value="UBA-like"/>
    <property type="match status" value="2"/>
</dbReference>
<dbReference type="PROSITE" id="PS50030">
    <property type="entry name" value="UBA"/>
    <property type="match status" value="2"/>
</dbReference>
<keyword id="KW-0539">Nucleus</keyword>
<keyword id="KW-1185">Reference proteome</keyword>
<keyword id="KW-0677">Repeat</keyword>
<protein>
    <recommendedName>
        <fullName>NEDD8 ultimate buster 1</fullName>
    </recommendedName>
    <alternativeName>
        <fullName>Negative regulator of ubiquitin-like proteins 1</fullName>
    </alternativeName>
</protein>
<sequence length="221" mass="24617">LGLRACDGNVDHAAVHIANRREELDQIKKEEREKKKRRLENINHLKGMGYSMRAARQALHQAAGNLEEALKILLHNPQLWWLNDSAPESNNRQQSPSQEKIDQLVYMGFDAVAAKAALRVFRDNVQLAAQTLVHNGGRLPPDLQLSAEDSSSTPSTSPSDSAGTSSASTDEDMETEAVNEILEDIPEHEEDYLDSTLEDEEIIIAEYLSYVENIKSAAKKN</sequence>
<feature type="chain" id="PRO_0000210991" description="NEDD8 ultimate buster 1">
    <location>
        <begin position="1" status="less than"/>
        <end position="221"/>
    </location>
</feature>
<feature type="domain" description="UBA 1" evidence="2">
    <location>
        <begin position="1" status="less than"/>
        <end position="19"/>
    </location>
</feature>
<feature type="domain" description="UBA 2" evidence="2">
    <location>
        <begin position="30"/>
        <end position="76"/>
    </location>
</feature>
<feature type="domain" description="UBA 3" evidence="2">
    <location>
        <begin position="95"/>
        <end position="135"/>
    </location>
</feature>
<feature type="region of interest" description="Disordered" evidence="3">
    <location>
        <begin position="136"/>
        <end position="193"/>
    </location>
</feature>
<feature type="compositionally biased region" description="Low complexity" evidence="3">
    <location>
        <begin position="146"/>
        <end position="168"/>
    </location>
</feature>
<feature type="compositionally biased region" description="Acidic residues" evidence="3">
    <location>
        <begin position="169"/>
        <end position="193"/>
    </location>
</feature>
<feature type="non-terminal residue">
    <location>
        <position position="1"/>
    </location>
</feature>
<gene>
    <name type="primary">NUB1</name>
</gene>
<reference key="1">
    <citation type="journal article" date="2002" name="Hum. Mol. Genet.">
        <title>The inherited blindness associated protein AIPL1 interacts with the cell cycle regulator protein NUB1.</title>
        <authorList>
            <person name="Akey D.T."/>
            <person name="Zhu X."/>
            <person name="Dyer M."/>
            <person name="Li A."/>
            <person name="Sorensen A."/>
            <person name="Blackshaw S."/>
            <person name="Fukuda-Kamitani T."/>
            <person name="Daiger S.P."/>
            <person name="Craft C.M."/>
            <person name="Kamitani T."/>
            <person name="Sohocki M.M."/>
        </authorList>
    </citation>
    <scope>NUCLEOTIDE SEQUENCE [MRNA]</scope>
    <scope>INTERACTION WITH AIPL1</scope>
    <source>
        <tissue>Retina</tissue>
    </source>
</reference>
<evidence type="ECO:0000250" key="1"/>
<evidence type="ECO:0000255" key="2">
    <source>
        <dbReference type="PROSITE-ProRule" id="PRU00212"/>
    </source>
</evidence>
<evidence type="ECO:0000256" key="3">
    <source>
        <dbReference type="SAM" id="MobiDB-lite"/>
    </source>
</evidence>
<evidence type="ECO:0000269" key="4">
    <source>
    </source>
</evidence>
<comment type="function">
    <text evidence="1">Specific down-regulator of the NEDD8 conjugation system. Recruits NEDD8 and its conjugates to the proteasome for degradation (By similarity).</text>
</comment>
<comment type="subunit">
    <text evidence="4">Directly interacts with NEDD8 and PSMD4/S5a, a member of the regulatory subunit of the 26S proteasome. Interacts with AIPL1.</text>
</comment>
<comment type="subcellular location">
    <subcellularLocation>
        <location evidence="1">Nucleus</location>
    </subcellularLocation>
    <text evidence="1">Predominantly nuclear.</text>
</comment>
<name>NUB1_BOVIN</name>